<sequence length="1234" mass="141073">MEGWSQVALVPLKNSNNNSNSNSSSNNSSNGVLVQDPISTVTTTVFDSVQNLVWCGDTSGYVRSLSSVKTSPYSIQLYPYTKFRTNTLNQPIIQILSHREGVLSLLNDQLSIYNRRGVPRNAVNSMSFKESNGRELFKDLKTMSFNCNSFNEIVVGTELDLIKVDMNKSNLVQQFNHTGKVAMVKEAPKLLALASSTGSLELFDPTSNSSIKTFSAHNGYMSDMDIKGNYIATCGNSIRPKRYHYHQAPEYTADPLVNIFDIRTMKAVAPVAFPAGVSSVRFHPKLPNILIVTSAYGLIEFVDIFDQTNVSVYHADMSAATPPLPPAGSSAAQQQKQQQQQQQQPHLSGLEISENGDFFMFNDGFSNLHLWSITNSGTLSKNFVNFPQEIERPDIVNGPSGVLGGGSGSGDGAFIDIDADVPLSVVGMPYYKELLLSNWPNDLKFVKEKARLPEPIDPDLLSIFEKQQQQKISQTPKWIPYDSLKYGTCNIPEYYSLTSQKDTQIPKFLSEKNGGQKQRQKSIQALEDSIFQCQNDEKIPNCYSRLQIQYSKFGVKDFDFAFYNRTQEYCGLENHSDNSYINSLLQLYRFQSVFYNKVVHSLSNEWLPNDEATIETNPEGSSILNELAYLFDMMFKAKSRNVKTYNFSQVMNHDKQAAKLINLNELMNLNSHEVRELIIAFNNYLLTRLSMDFRNQFNFNFDLTELAYEIEVRGRGHSCPIYDKQMGAMFSLELITPPHNMMSKMSILVNPNTQQDQQQQQQQQQQQQQQQQPTNLANIRKNLNILTYLEYSMNQYKTIPCTQHQHFHPHTLEIRTSITKLPPVLVLNVNLTNEEFRIINSLKQWLVPDLYAVRATNNGSNRGYSFKPSMPVSGDFKKYQLLGYVCEISHQVDTSRTGGHNLVSFVKIKDEWMFFNDYLVIPIPEEEVFNLTYSWKKPVIVIYQEVDKMDKVEPFRHITHFQGNDSILYRDHFAGPIRELYQREYTLLTREKEAPQPGTLVAIDAEFVTLKPEQLEISYNGQKKLVKPKELSLARVSVLRGGREGINSNITGNNNDDNNNISGMIIDDPLFGEAFIDDYIVHKSHIYDYTTNFSGIEPNDLDIHKSSKNLVTLQTAYRKLWLLLNLGVIFVGHGLYTDFRTINLQVPEEQIRDTADFYYKSSFKRQLSLKFLAYVMLKERVQKGNHDSIEDARTALLLYKKYVELNQKSTNEFEKMLNFVYEEGNRLKYRVPEL</sequence>
<accession>A5E1W0</accession>
<reference key="1">
    <citation type="journal article" date="2009" name="Nature">
        <title>Evolution of pathogenicity and sexual reproduction in eight Candida genomes.</title>
        <authorList>
            <person name="Butler G."/>
            <person name="Rasmussen M.D."/>
            <person name="Lin M.F."/>
            <person name="Santos M.A.S."/>
            <person name="Sakthikumar S."/>
            <person name="Munro C.A."/>
            <person name="Rheinbay E."/>
            <person name="Grabherr M."/>
            <person name="Forche A."/>
            <person name="Reedy J.L."/>
            <person name="Agrafioti I."/>
            <person name="Arnaud M.B."/>
            <person name="Bates S."/>
            <person name="Brown A.J.P."/>
            <person name="Brunke S."/>
            <person name="Costanzo M.C."/>
            <person name="Fitzpatrick D.A."/>
            <person name="de Groot P.W.J."/>
            <person name="Harris D."/>
            <person name="Hoyer L.L."/>
            <person name="Hube B."/>
            <person name="Klis F.M."/>
            <person name="Kodira C."/>
            <person name="Lennard N."/>
            <person name="Logue M.E."/>
            <person name="Martin R."/>
            <person name="Neiman A.M."/>
            <person name="Nikolaou E."/>
            <person name="Quail M.A."/>
            <person name="Quinn J."/>
            <person name="Santos M.C."/>
            <person name="Schmitzberger F.F."/>
            <person name="Sherlock G."/>
            <person name="Shah P."/>
            <person name="Silverstein K.A.T."/>
            <person name="Skrzypek M.S."/>
            <person name="Soll D."/>
            <person name="Staggs R."/>
            <person name="Stansfield I."/>
            <person name="Stumpf M.P.H."/>
            <person name="Sudbery P.E."/>
            <person name="Srikantha T."/>
            <person name="Zeng Q."/>
            <person name="Berman J."/>
            <person name="Berriman M."/>
            <person name="Heitman J."/>
            <person name="Gow N.A.R."/>
            <person name="Lorenz M.C."/>
            <person name="Birren B.W."/>
            <person name="Kellis M."/>
            <person name="Cuomo C.A."/>
        </authorList>
    </citation>
    <scope>NUCLEOTIDE SEQUENCE [LARGE SCALE GENOMIC DNA]</scope>
    <source>
        <strain>ATCC 11503 / BCRC 21390 / CBS 2605 / JCM 1781 / NBRC 1676 / NRRL YB-4239</strain>
    </source>
</reference>
<comment type="function">
    <text evidence="1">Catalytic subunit of the poly(A)-nuclease (PAN) deadenylation complex, one of two cytoplasmic mRNA deadenylases involved in mRNA turnover. PAN specifically shortens poly(A) tails of RNA and the activity is stimulated by poly(A)-binding protein PAB1. PAN deadenylation is followed by rapid degradation of the shortened mRNA tails by the CCR4-NOT complex. Deadenylated mRNAs are then degraded by two alternative mechanisms, namely exosome-mediated 3'-5' exonucleolytic degradation, or deadenylation-dependent mRNA decaping and subsequent 5'-3' exonucleolytic degradation by XRN1. May also be involved in post-transcriptional maturation of mRNA poly(A) tails.</text>
</comment>
<comment type="catalytic activity">
    <reaction evidence="1">
        <text>Exonucleolytic cleavage of poly(A) to 5'-AMP.</text>
        <dbReference type="EC" id="3.1.13.4"/>
    </reaction>
</comment>
<comment type="cofactor">
    <cofactor evidence="1">
        <name>a divalent metal cation</name>
        <dbReference type="ChEBI" id="CHEBI:60240"/>
    </cofactor>
    <text evidence="1">Binds 2 metal cations per subunit in the catalytic exonuclease domain.</text>
</comment>
<comment type="activity regulation">
    <text evidence="1">Positively regulated by the regulatory subunit PAN3.</text>
</comment>
<comment type="subunit">
    <text evidence="1">Forms a heterotrimer with an asymmetric homodimer of the regulatory subunit PAN3 to form the poly(A)-nuclease (PAN) deadenylation complex.</text>
</comment>
<comment type="subcellular location">
    <subcellularLocation>
        <location evidence="1">Cytoplasm</location>
    </subcellularLocation>
</comment>
<comment type="domain">
    <text evidence="1">Contains a pseudo-UCH domain. This ubiquitin C-terminal hydrolase (UCH)-like or ubiquitin specific protease (USP)-like domain is predicted to be catalytically inactive because it lacks the active site catalytic triad characteristic of thiol proteases, with residues at the equivalent structural positions that are incompatible with catalysis, and it cannot bind ubiquitin. It functions as a structural scaffold for intra- and intermolecular interactions in the complex.</text>
</comment>
<comment type="domain">
    <text evidence="1">The linker, or PAN3 interaction domain (PID), between the WD40 repeats and the pseudo-UCH domain mediates interaction with PAN3.</text>
</comment>
<comment type="similarity">
    <text evidence="1">Belongs to the peptidase C19 family. PAN2 subfamily.</text>
</comment>
<proteinExistence type="inferred from homology"/>
<keyword id="KW-0963">Cytoplasm</keyword>
<keyword id="KW-0269">Exonuclease</keyword>
<keyword id="KW-0378">Hydrolase</keyword>
<keyword id="KW-0479">Metal-binding</keyword>
<keyword id="KW-0507">mRNA processing</keyword>
<keyword id="KW-0540">Nuclease</keyword>
<keyword id="KW-1185">Reference proteome</keyword>
<keyword id="KW-0677">Repeat</keyword>
<keyword id="KW-0853">WD repeat</keyword>
<protein>
    <recommendedName>
        <fullName evidence="1">PAN2-PAN3 deadenylation complex catalytic subunit PAN2</fullName>
        <ecNumber evidence="1">3.1.13.4</ecNumber>
    </recommendedName>
    <alternativeName>
        <fullName evidence="1">PAB1P-dependent poly(A)-specific ribonuclease</fullName>
    </alternativeName>
    <alternativeName>
        <fullName evidence="1">Poly(A)-nuclease deadenylation complex subunit 2</fullName>
        <shortName evidence="1">PAN deadenylation complex subunit 2</shortName>
    </alternativeName>
</protein>
<evidence type="ECO:0000255" key="1">
    <source>
        <dbReference type="HAMAP-Rule" id="MF_03182"/>
    </source>
</evidence>
<evidence type="ECO:0000256" key="2">
    <source>
        <dbReference type="SAM" id="MobiDB-lite"/>
    </source>
</evidence>
<dbReference type="EC" id="3.1.13.4" evidence="1"/>
<dbReference type="EMBL" id="CH981527">
    <property type="protein sequence ID" value="EDK45418.1"/>
    <property type="molecule type" value="Genomic_DNA"/>
</dbReference>
<dbReference type="RefSeq" id="XP_001525669.1">
    <property type="nucleotide sequence ID" value="XM_001525619.1"/>
</dbReference>
<dbReference type="SMR" id="A5E1W0"/>
<dbReference type="FunCoup" id="A5E1W0">
    <property type="interactions" value="664"/>
</dbReference>
<dbReference type="STRING" id="379508.A5E1W0"/>
<dbReference type="GeneID" id="5232728"/>
<dbReference type="KEGG" id="lel:PVL30_003083"/>
<dbReference type="VEuPathDB" id="FungiDB:LELG_03597"/>
<dbReference type="eggNOG" id="KOG1275">
    <property type="taxonomic scope" value="Eukaryota"/>
</dbReference>
<dbReference type="HOGENOM" id="CLU_002369_1_0_1"/>
<dbReference type="InParanoid" id="A5E1W0"/>
<dbReference type="OMA" id="TQELLWT"/>
<dbReference type="OrthoDB" id="16516at2759"/>
<dbReference type="Proteomes" id="UP000001996">
    <property type="component" value="Unassembled WGS sequence"/>
</dbReference>
<dbReference type="GO" id="GO:0000932">
    <property type="term" value="C:P-body"/>
    <property type="evidence" value="ECO:0007669"/>
    <property type="project" value="TreeGrafter"/>
</dbReference>
<dbReference type="GO" id="GO:0031251">
    <property type="term" value="C:PAN complex"/>
    <property type="evidence" value="ECO:0007669"/>
    <property type="project" value="UniProtKB-UniRule"/>
</dbReference>
<dbReference type="GO" id="GO:0046872">
    <property type="term" value="F:metal ion binding"/>
    <property type="evidence" value="ECO:0007669"/>
    <property type="project" value="UniProtKB-KW"/>
</dbReference>
<dbReference type="GO" id="GO:0003676">
    <property type="term" value="F:nucleic acid binding"/>
    <property type="evidence" value="ECO:0007669"/>
    <property type="project" value="InterPro"/>
</dbReference>
<dbReference type="GO" id="GO:0004535">
    <property type="term" value="F:poly(A)-specific ribonuclease activity"/>
    <property type="evidence" value="ECO:0007669"/>
    <property type="project" value="UniProtKB-UniRule"/>
</dbReference>
<dbReference type="GO" id="GO:0006397">
    <property type="term" value="P:mRNA processing"/>
    <property type="evidence" value="ECO:0007669"/>
    <property type="project" value="UniProtKB-KW"/>
</dbReference>
<dbReference type="GO" id="GO:0000289">
    <property type="term" value="P:nuclear-transcribed mRNA poly(A) tail shortening"/>
    <property type="evidence" value="ECO:0007669"/>
    <property type="project" value="UniProtKB-UniRule"/>
</dbReference>
<dbReference type="CDD" id="cd06143">
    <property type="entry name" value="PAN2_exo"/>
    <property type="match status" value="1"/>
</dbReference>
<dbReference type="Gene3D" id="3.90.70.10">
    <property type="entry name" value="Cysteine proteinases"/>
    <property type="match status" value="1"/>
</dbReference>
<dbReference type="Gene3D" id="3.30.420.10">
    <property type="entry name" value="Ribonuclease H-like superfamily/Ribonuclease H"/>
    <property type="match status" value="1"/>
</dbReference>
<dbReference type="Gene3D" id="2.130.10.10">
    <property type="entry name" value="YVTN repeat-like/Quinoprotein amine dehydrogenase"/>
    <property type="match status" value="1"/>
</dbReference>
<dbReference type="HAMAP" id="MF_03182">
    <property type="entry name" value="PAN2"/>
    <property type="match status" value="1"/>
</dbReference>
<dbReference type="InterPro" id="IPR013520">
    <property type="entry name" value="Exonuclease_RNaseT/DNA_pol3"/>
</dbReference>
<dbReference type="InterPro" id="IPR030843">
    <property type="entry name" value="PAN2"/>
</dbReference>
<dbReference type="InterPro" id="IPR050785">
    <property type="entry name" value="PAN2-PAN3_catalytic_subunit"/>
</dbReference>
<dbReference type="InterPro" id="IPR048841">
    <property type="entry name" value="PAN2_N"/>
</dbReference>
<dbReference type="InterPro" id="IPR028881">
    <property type="entry name" value="PAN2_UCH_dom"/>
</dbReference>
<dbReference type="InterPro" id="IPR038765">
    <property type="entry name" value="Papain-like_cys_pep_sf"/>
</dbReference>
<dbReference type="InterPro" id="IPR012337">
    <property type="entry name" value="RNaseH-like_sf"/>
</dbReference>
<dbReference type="InterPro" id="IPR036397">
    <property type="entry name" value="RNaseH_sf"/>
</dbReference>
<dbReference type="InterPro" id="IPR028889">
    <property type="entry name" value="USP_dom"/>
</dbReference>
<dbReference type="InterPro" id="IPR015943">
    <property type="entry name" value="WD40/YVTN_repeat-like_dom_sf"/>
</dbReference>
<dbReference type="InterPro" id="IPR036322">
    <property type="entry name" value="WD40_repeat_dom_sf"/>
</dbReference>
<dbReference type="PANTHER" id="PTHR15728">
    <property type="entry name" value="DEADENYLATION COMPLEX CATALYTIC SUBUNIT PAN2"/>
    <property type="match status" value="1"/>
</dbReference>
<dbReference type="PANTHER" id="PTHR15728:SF0">
    <property type="entry name" value="PAN2-PAN3 DEADENYLATION COMPLEX CATALYTIC SUBUNIT PAN2"/>
    <property type="match status" value="1"/>
</dbReference>
<dbReference type="Pfam" id="PF20770">
    <property type="entry name" value="PAN2_N"/>
    <property type="match status" value="1"/>
</dbReference>
<dbReference type="Pfam" id="PF00929">
    <property type="entry name" value="RNase_T"/>
    <property type="match status" value="1"/>
</dbReference>
<dbReference type="Pfam" id="PF13423">
    <property type="entry name" value="UCH_1"/>
    <property type="match status" value="1"/>
</dbReference>
<dbReference type="SMART" id="SM00479">
    <property type="entry name" value="EXOIII"/>
    <property type="match status" value="1"/>
</dbReference>
<dbReference type="SUPFAM" id="SSF54001">
    <property type="entry name" value="Cysteine proteinases"/>
    <property type="match status" value="1"/>
</dbReference>
<dbReference type="SUPFAM" id="SSF53098">
    <property type="entry name" value="Ribonuclease H-like"/>
    <property type="match status" value="1"/>
</dbReference>
<dbReference type="SUPFAM" id="SSF50978">
    <property type="entry name" value="WD40 repeat-like"/>
    <property type="match status" value="1"/>
</dbReference>
<dbReference type="PROSITE" id="PS50235">
    <property type="entry name" value="USP_3"/>
    <property type="match status" value="1"/>
</dbReference>
<gene>
    <name evidence="1" type="primary">PAN2</name>
    <name type="ORF">LELG_03597</name>
</gene>
<name>PAN2_LODEL</name>
<feature type="chain" id="PRO_0000295348" description="PAN2-PAN3 deadenylation complex catalytic subunit PAN2">
    <location>
        <begin position="1"/>
        <end position="1234"/>
    </location>
</feature>
<feature type="repeat" description="WD 1" evidence="1">
    <location>
        <begin position="176"/>
        <end position="213"/>
    </location>
</feature>
<feature type="repeat" description="WD 2" evidence="1">
    <location>
        <begin position="272"/>
        <end position="315"/>
    </location>
</feature>
<feature type="repeat" description="WD 3" evidence="1">
    <location>
        <begin position="342"/>
        <end position="381"/>
    </location>
</feature>
<feature type="domain" description="USP" evidence="1">
    <location>
        <begin position="538"/>
        <end position="946"/>
    </location>
</feature>
<feature type="domain" description="Exonuclease" evidence="1">
    <location>
        <begin position="1072"/>
        <end position="1199"/>
    </location>
</feature>
<feature type="region of interest" description="Disordered" evidence="2">
    <location>
        <begin position="12"/>
        <end position="32"/>
    </location>
</feature>
<feature type="region of interest" description="Disordered" evidence="2">
    <location>
        <begin position="323"/>
        <end position="346"/>
    </location>
</feature>
<feature type="region of interest" description="Linker" evidence="1">
    <location>
        <begin position="383"/>
        <end position="537"/>
    </location>
</feature>
<feature type="region of interest" description="Disordered" evidence="2">
    <location>
        <begin position="751"/>
        <end position="775"/>
    </location>
</feature>
<feature type="compositionally biased region" description="Low complexity" evidence="2">
    <location>
        <begin position="14"/>
        <end position="30"/>
    </location>
</feature>
<feature type="compositionally biased region" description="Low complexity" evidence="2">
    <location>
        <begin position="333"/>
        <end position="344"/>
    </location>
</feature>
<feature type="compositionally biased region" description="Low complexity" evidence="2">
    <location>
        <begin position="754"/>
        <end position="772"/>
    </location>
</feature>
<feature type="binding site" evidence="1">
    <location>
        <position position="1004"/>
    </location>
    <ligand>
        <name>a divalent metal cation</name>
        <dbReference type="ChEBI" id="CHEBI:60240"/>
        <note>catalytic</note>
    </ligand>
</feature>
<feature type="binding site" evidence="1">
    <location>
        <position position="1006"/>
    </location>
    <ligand>
        <name>a divalent metal cation</name>
        <dbReference type="ChEBI" id="CHEBI:60240"/>
        <note>catalytic</note>
    </ligand>
</feature>
<feature type="binding site" evidence="1">
    <location>
        <position position="1138"/>
    </location>
    <ligand>
        <name>a divalent metal cation</name>
        <dbReference type="ChEBI" id="CHEBI:60240"/>
        <note>catalytic</note>
    </ligand>
</feature>
<feature type="binding site" evidence="1">
    <location>
        <position position="1191"/>
    </location>
    <ligand>
        <name>a divalent metal cation</name>
        <dbReference type="ChEBI" id="CHEBI:60240"/>
        <note>catalytic</note>
    </ligand>
</feature>
<organism>
    <name type="scientific">Lodderomyces elongisporus (strain ATCC 11503 / CBS 2605 / JCM 1781 / NBRC 1676 / NRRL YB-4239)</name>
    <name type="common">Yeast</name>
    <name type="synonym">Saccharomyces elongisporus</name>
    <dbReference type="NCBI Taxonomy" id="379508"/>
    <lineage>
        <taxon>Eukaryota</taxon>
        <taxon>Fungi</taxon>
        <taxon>Dikarya</taxon>
        <taxon>Ascomycota</taxon>
        <taxon>Saccharomycotina</taxon>
        <taxon>Pichiomycetes</taxon>
        <taxon>Debaryomycetaceae</taxon>
        <taxon>Candida/Lodderomyces clade</taxon>
        <taxon>Lodderomyces</taxon>
    </lineage>
</organism>